<comment type="function">
    <text evidence="1 3">Dermonecrotic toxins cleave the phosphodiester linkage between the phosphate and headgroup of certain phospholipids (sphingolipid and lysolipid substrates), forming an alcohol (often choline) and a cyclic phosphate (By similarity). This toxin acts on sphingomyelin (SM) (By similarity). It may also act on ceramide phosphoethanolamine (CPE), lysophosphatidylcholine (LPC) and lysophosphatidylethanolamine (LPE), but not on lysophosphatidylserine (LPS), and lysophosphatidylglycerol (LPG) (By similarity). It acts by transphosphatidylation, releasing exclusively cyclic phosphate products as second products (By similarity). Induces dermonecrosis, hemolysis, increased vascular permeability, edema, inflammatory response, and platelet aggregation (By similarity).</text>
</comment>
<comment type="catalytic activity">
    <reaction evidence="1">
        <text>an N-(acyl)-sphingosylphosphocholine = an N-(acyl)-sphingosyl-1,3-cyclic phosphate + choline</text>
        <dbReference type="Rhea" id="RHEA:60652"/>
        <dbReference type="ChEBI" id="CHEBI:15354"/>
        <dbReference type="ChEBI" id="CHEBI:64583"/>
        <dbReference type="ChEBI" id="CHEBI:143892"/>
    </reaction>
</comment>
<comment type="catalytic activity">
    <reaction evidence="1">
        <text>an N-(acyl)-sphingosylphosphoethanolamine = an N-(acyl)-sphingosyl-1,3-cyclic phosphate + ethanolamine</text>
        <dbReference type="Rhea" id="RHEA:60648"/>
        <dbReference type="ChEBI" id="CHEBI:57603"/>
        <dbReference type="ChEBI" id="CHEBI:143891"/>
        <dbReference type="ChEBI" id="CHEBI:143892"/>
    </reaction>
</comment>
<comment type="catalytic activity">
    <reaction evidence="1">
        <text>a 1-acyl-sn-glycero-3-phosphocholine = a 1-acyl-sn-glycero-2,3-cyclic phosphate + choline</text>
        <dbReference type="Rhea" id="RHEA:60700"/>
        <dbReference type="ChEBI" id="CHEBI:15354"/>
        <dbReference type="ChEBI" id="CHEBI:58168"/>
        <dbReference type="ChEBI" id="CHEBI:143947"/>
    </reaction>
</comment>
<comment type="catalytic activity">
    <reaction evidence="1">
        <text>a 1-acyl-sn-glycero-3-phosphoethanolamine = a 1-acyl-sn-glycero-2,3-cyclic phosphate + ethanolamine</text>
        <dbReference type="Rhea" id="RHEA:60704"/>
        <dbReference type="ChEBI" id="CHEBI:57603"/>
        <dbReference type="ChEBI" id="CHEBI:64381"/>
        <dbReference type="ChEBI" id="CHEBI:143947"/>
    </reaction>
</comment>
<comment type="cofactor">
    <cofactor evidence="5">
        <name>Mg(2+)</name>
        <dbReference type="ChEBI" id="CHEBI:18420"/>
    </cofactor>
    <text evidence="5">Binds 1 Mg(2+) ion per subunit.</text>
</comment>
<comment type="subcellular location">
    <subcellularLocation>
        <location evidence="8">Secreted</location>
    </subcellularLocation>
</comment>
<comment type="tissue specificity">
    <text evidence="8">Expressed by the venom gland.</text>
</comment>
<comment type="similarity">
    <text evidence="7">Belongs to the arthropod phospholipase D family. Class II subfamily.</text>
</comment>
<comment type="caution">
    <text evidence="1 2 4">The most common activity assay for dermonecrotic toxins detects enzymatic activity by monitoring choline release from substrate. Liberation of choline from sphingomyelin (SM) or lysophosphatidylcholine (LPC) is commonly assumed to result from substrate hydrolysis, giving either ceramide-1-phosphate (C1P) or lysophosphatidic acid (LPA), respectively, as a second product. However, two studies from Lajoie and colleagues (2013 and 2015) report the observation of exclusive formation of cyclic phosphate products as second products, resulting from intramolecular transphosphatidylation. Cyclic phosphates have vastly different biological properties from their monoester counterparts, and they may be relevant to the pathology of brown spider envenomation.</text>
</comment>
<keyword id="KW-0204">Cytolysis</keyword>
<keyword id="KW-1061">Dermonecrotic toxin</keyword>
<keyword id="KW-1015">Disulfide bond</keyword>
<keyword id="KW-0354">Hemolysis</keyword>
<keyword id="KW-0442">Lipid degradation</keyword>
<keyword id="KW-0443">Lipid metabolism</keyword>
<keyword id="KW-0456">Lyase</keyword>
<keyword id="KW-0460">Magnesium</keyword>
<keyword id="KW-0479">Metal-binding</keyword>
<keyword id="KW-0964">Secreted</keyword>
<keyword id="KW-0800">Toxin</keyword>
<proteinExistence type="evidence at transcript level"/>
<dbReference type="EC" id="4.6.1.-" evidence="4"/>
<dbReference type="EMBL" id="FJ171503">
    <property type="protein sequence ID" value="ACN48999.1"/>
    <property type="molecule type" value="mRNA"/>
</dbReference>
<dbReference type="SMR" id="C0JB68"/>
<dbReference type="GO" id="GO:0005576">
    <property type="term" value="C:extracellular region"/>
    <property type="evidence" value="ECO:0007669"/>
    <property type="project" value="UniProtKB-SubCell"/>
</dbReference>
<dbReference type="GO" id="GO:0016829">
    <property type="term" value="F:lyase activity"/>
    <property type="evidence" value="ECO:0007669"/>
    <property type="project" value="UniProtKB-KW"/>
</dbReference>
<dbReference type="GO" id="GO:0046872">
    <property type="term" value="F:metal ion binding"/>
    <property type="evidence" value="ECO:0007669"/>
    <property type="project" value="UniProtKB-KW"/>
</dbReference>
<dbReference type="GO" id="GO:0008081">
    <property type="term" value="F:phosphoric diester hydrolase activity"/>
    <property type="evidence" value="ECO:0007669"/>
    <property type="project" value="InterPro"/>
</dbReference>
<dbReference type="GO" id="GO:0090729">
    <property type="term" value="F:toxin activity"/>
    <property type="evidence" value="ECO:0007669"/>
    <property type="project" value="UniProtKB-KW"/>
</dbReference>
<dbReference type="GO" id="GO:0031640">
    <property type="term" value="P:killing of cells of another organism"/>
    <property type="evidence" value="ECO:0007669"/>
    <property type="project" value="UniProtKB-KW"/>
</dbReference>
<dbReference type="GO" id="GO:0016042">
    <property type="term" value="P:lipid catabolic process"/>
    <property type="evidence" value="ECO:0007669"/>
    <property type="project" value="UniProtKB-KW"/>
</dbReference>
<dbReference type="CDD" id="cd08576">
    <property type="entry name" value="GDPD_like_SMaseD_PLD"/>
    <property type="match status" value="1"/>
</dbReference>
<dbReference type="Gene3D" id="3.20.20.190">
    <property type="entry name" value="Phosphatidylinositol (PI) phosphodiesterase"/>
    <property type="match status" value="1"/>
</dbReference>
<dbReference type="InterPro" id="IPR017946">
    <property type="entry name" value="PLC-like_Pdiesterase_TIM-brl"/>
</dbReference>
<dbReference type="SUPFAM" id="SSF51695">
    <property type="entry name" value="PLC-like phosphodiesterases"/>
    <property type="match status" value="1"/>
</dbReference>
<reference key="1">
    <citation type="journal article" date="2009" name="Mol. Biol. Evol.">
        <title>Molecular evolution, functional variation, and proposed nomenclature of the gene family that includes sphingomyelinase D in sicariid spider venoms.</title>
        <authorList>
            <person name="Binford G.J."/>
            <person name="Bodner M.R."/>
            <person name="Cordes M.H."/>
            <person name="Baldwin K.L."/>
            <person name="Rynerson M.R."/>
            <person name="Burns S.N."/>
            <person name="Zobel-Thropp P.A."/>
        </authorList>
    </citation>
    <scope>NUCLEOTIDE SEQUENCE [MRNA]</scope>
    <scope>NOMENCLATURE</scope>
    <source>
        <tissue>Venom gland</tissue>
    </source>
</reference>
<organism>
    <name type="scientific">Sicarius patagonicus</name>
    <name type="common">Six-eyed sand spider</name>
    <dbReference type="NCBI Taxonomy" id="571540"/>
    <lineage>
        <taxon>Eukaryota</taxon>
        <taxon>Metazoa</taxon>
        <taxon>Ecdysozoa</taxon>
        <taxon>Arthropoda</taxon>
        <taxon>Chelicerata</taxon>
        <taxon>Arachnida</taxon>
        <taxon>Araneae</taxon>
        <taxon>Araneomorphae</taxon>
        <taxon>Haplogynae</taxon>
        <taxon>Scytodoidea</taxon>
        <taxon>Sicariidae</taxon>
        <taxon>Sicarius</taxon>
    </lineage>
</organism>
<name>B2H_SICPA</name>
<feature type="chain" id="PRO_0000392871" description="Dermonecrotic toxin SpaSicTox-betaIIA1">
    <location>
        <begin position="1" status="less than"/>
        <end position="275"/>
    </location>
</feature>
<feature type="active site" evidence="5">
    <location>
        <position position="5"/>
    </location>
</feature>
<feature type="active site" description="Nucleophile" evidence="5">
    <location>
        <position position="41"/>
    </location>
</feature>
<feature type="binding site" evidence="5">
    <location>
        <position position="25"/>
    </location>
    <ligand>
        <name>Mg(2+)</name>
        <dbReference type="ChEBI" id="CHEBI:18420"/>
    </ligand>
</feature>
<feature type="binding site" evidence="5">
    <location>
        <position position="27"/>
    </location>
    <ligand>
        <name>Mg(2+)</name>
        <dbReference type="ChEBI" id="CHEBI:18420"/>
    </ligand>
</feature>
<feature type="binding site" evidence="5">
    <location>
        <position position="85"/>
    </location>
    <ligand>
        <name>Mg(2+)</name>
        <dbReference type="ChEBI" id="CHEBI:18420"/>
    </ligand>
</feature>
<feature type="disulfide bond" evidence="3">
    <location>
        <begin position="45"/>
        <end position="51"/>
    </location>
</feature>
<feature type="disulfide bond" evidence="3">
    <location>
        <begin position="47"/>
        <end position="190"/>
    </location>
</feature>
<feature type="non-terminal residue">
    <location>
        <position position="1"/>
    </location>
</feature>
<protein>
    <recommendedName>
        <fullName evidence="6">Dermonecrotic toxin SpaSicTox-betaIIA1</fullName>
        <ecNumber evidence="4">4.6.1.-</ecNumber>
    </recommendedName>
    <alternativeName>
        <fullName>Phospholipase D</fullName>
        <shortName>PLD</shortName>
    </alternativeName>
    <alternativeName>
        <fullName>Sphingomyelin phosphodiesterase D</fullName>
        <shortName>SMD</shortName>
        <shortName>SMase D</shortName>
        <shortName>Sphingomyelinase D</shortName>
    </alternativeName>
</protein>
<accession>C0JB68</accession>
<evidence type="ECO:0000250" key="1">
    <source>
        <dbReference type="UniProtKB" id="A0A0D4WTV1"/>
    </source>
</evidence>
<evidence type="ECO:0000250" key="2">
    <source>
        <dbReference type="UniProtKB" id="A0A0D4WV12"/>
    </source>
</evidence>
<evidence type="ECO:0000250" key="3">
    <source>
        <dbReference type="UniProtKB" id="P0CE80"/>
    </source>
</evidence>
<evidence type="ECO:0000250" key="4">
    <source>
        <dbReference type="UniProtKB" id="Q4ZFU2"/>
    </source>
</evidence>
<evidence type="ECO:0000250" key="5">
    <source>
        <dbReference type="UniProtKB" id="Q8I914"/>
    </source>
</evidence>
<evidence type="ECO:0000303" key="6">
    <source>
    </source>
</evidence>
<evidence type="ECO:0000305" key="7"/>
<evidence type="ECO:0000305" key="8">
    <source>
    </source>
</evidence>
<sequence>WIMGHMVNPFEQVDEFLNLGANAIEFDIDFDENGIAKYTHHGIPCDCGRLCTKSAVFTEYLDYVRQVTSPGDPKFRKELVLLALDLKLQRISSEKAYAAGVDVATKLLDHYWKRGWNGGRAYILLNIPLVEDYEFIKGFKDTLRKEGHEQYNAKVGINFTGNEDLDEIRKVLEKLGEDEHIWQADGITSCFARGTDRLEKALEKRDTPGYKYISKVYAWTLVRSSIMRRSLRLGVDGVMSNNPDRVVKVLKEKEFANKFRLATYADNPWEKFTPI</sequence>